<organism>
    <name type="scientific">Saccharomyces cerevisiae (strain ATCC 204508 / S288c)</name>
    <name type="common">Baker's yeast</name>
    <dbReference type="NCBI Taxonomy" id="559292"/>
    <lineage>
        <taxon>Eukaryota</taxon>
        <taxon>Fungi</taxon>
        <taxon>Dikarya</taxon>
        <taxon>Ascomycota</taxon>
        <taxon>Saccharomycotina</taxon>
        <taxon>Saccharomycetes</taxon>
        <taxon>Saccharomycetales</taxon>
        <taxon>Saccharomycetaceae</taxon>
        <taxon>Saccharomyces</taxon>
    </lineage>
</organism>
<feature type="chain" id="PRO_0000203462" description="Uncharacterized protein YNL018C">
    <location>
        <begin position="1"/>
        <end position="612"/>
    </location>
</feature>
<feature type="region of interest" description="Disordered" evidence="1">
    <location>
        <begin position="176"/>
        <end position="203"/>
    </location>
</feature>
<feature type="compositionally biased region" description="Polar residues" evidence="1">
    <location>
        <begin position="176"/>
        <end position="196"/>
    </location>
</feature>
<evidence type="ECO:0000256" key="1">
    <source>
        <dbReference type="SAM" id="MobiDB-lite"/>
    </source>
</evidence>
<evidence type="ECO:0000305" key="2"/>
<comment type="similarity">
    <text evidence="2">To yeast YNL034w.</text>
</comment>
<accession>P53976</accession>
<accession>D6W1G1</accession>
<keyword id="KW-1185">Reference proteome</keyword>
<dbReference type="EMBL" id="Z71294">
    <property type="protein sequence ID" value="CAA95880.1"/>
    <property type="molecule type" value="Genomic_DNA"/>
</dbReference>
<dbReference type="EMBL" id="BK006947">
    <property type="protein sequence ID" value="DAA10527.1"/>
    <property type="molecule type" value="Genomic_DNA"/>
</dbReference>
<dbReference type="PIR" id="S62930">
    <property type="entry name" value="S62930"/>
</dbReference>
<dbReference type="RefSeq" id="NP_014380.3">
    <property type="nucleotide sequence ID" value="NM_001182857.3"/>
</dbReference>
<dbReference type="BioGRID" id="35808">
    <property type="interactions" value="14"/>
</dbReference>
<dbReference type="DIP" id="DIP-4384N"/>
<dbReference type="FunCoup" id="P53976">
    <property type="interactions" value="36"/>
</dbReference>
<dbReference type="IntAct" id="P53976">
    <property type="interactions" value="1"/>
</dbReference>
<dbReference type="STRING" id="4932.YNL018C"/>
<dbReference type="PaxDb" id="4932-YNL018C"/>
<dbReference type="EnsemblFungi" id="YNL018C_mRNA">
    <property type="protein sequence ID" value="YNL018C"/>
    <property type="gene ID" value="YNL018C"/>
</dbReference>
<dbReference type="GeneID" id="855713"/>
<dbReference type="KEGG" id="sce:YNL018C"/>
<dbReference type="AGR" id="SGD:S000004963"/>
<dbReference type="SGD" id="S000004963">
    <property type="gene designation" value="YNL018C"/>
</dbReference>
<dbReference type="VEuPathDB" id="FungiDB:YNL018C"/>
<dbReference type="eggNOG" id="ENOG502T01C">
    <property type="taxonomic scope" value="Eukaryota"/>
</dbReference>
<dbReference type="GeneTree" id="ENSGT00940000176557"/>
<dbReference type="HOGENOM" id="CLU_030375_0_0_1"/>
<dbReference type="InParanoid" id="P53976"/>
<dbReference type="OrthoDB" id="4045883at2759"/>
<dbReference type="BioCyc" id="YEAST:G3O-33056-MONOMER"/>
<dbReference type="BioGRID-ORCS" id="855713">
    <property type="hits" value="6 hits in 10 CRISPR screens"/>
</dbReference>
<dbReference type="PRO" id="PR:P53976"/>
<dbReference type="Proteomes" id="UP000002311">
    <property type="component" value="Chromosome XIV"/>
</dbReference>
<dbReference type="RNAct" id="P53976">
    <property type="molecule type" value="protein"/>
</dbReference>
<dbReference type="GO" id="GO:0005628">
    <property type="term" value="C:prospore membrane"/>
    <property type="evidence" value="ECO:0007005"/>
    <property type="project" value="SGD"/>
</dbReference>
<dbReference type="GO" id="GO:0043935">
    <property type="term" value="P:sexual sporulation resulting in formation of a cellular spore"/>
    <property type="evidence" value="ECO:0000315"/>
    <property type="project" value="SGD"/>
</dbReference>
<proteinExistence type="predicted"/>
<sequence length="612" mass="69552">MSTSFQEFKAFCNKVGLDFQWLNLQSSKSVPENGSSEGFSAVSDTVQENIRPATEPLNVNQSKDPVSNFFYDVKNAPLWNVYKRNHSGHSSAEACSGVSSRQAPKNIPEAMVKETVLSNHDNVTIINELLPTSSAMHQEESTAMTTSYLLSHSVNDTCNVMFSSSSHNRAMLPSSLVQRNNATTSPTTDSASENNESVPSLTSSVSTSSSVYSSWNPPHSPHISSFPDGNFASLNAEVTCFDFRRTKDSRTKETNESIIPTEIYCPTNSTDHHKHYPSRKSKQDACAPAPCNQNISCSVVSTAEFSQSNHTLTTVVPSYMQQYLDRPQNWFESKMGKYCPLFLRSTKNIDYDSLEFKFERKMIAVQYLLLDEQSEPRRYYNPSNKSIPFWKRPFNFDTMPSYDQLMEEAECRFYSYQYKYEGFQRIEPYSISCPWKNTQREIDLVLDHIHFSLDVGEKKSLNRKGNITLDTLDSKVDPNIQIKPYQIFPSNNLVYEGLPHPAEQSLILSPDTSLIERAFQALIDICKESIPSSNDCSTRNNNSAPQLTVPEPSKPCRLLLVRESRTATELKTNKKLWLHSQRRNIEVTVPMHPSERGTKSWLRKWLSTFVHQ</sequence>
<protein>
    <recommendedName>
        <fullName>Uncharacterized protein YNL018C</fullName>
    </recommendedName>
</protein>
<name>YNB8_YEAST</name>
<gene>
    <name type="ordered locus">YNL018C</name>
    <name type="ORF">N2831</name>
</gene>
<reference key="1">
    <citation type="journal article" date="1997" name="Nature">
        <title>The nucleotide sequence of Saccharomyces cerevisiae chromosome XIV and its evolutionary implications.</title>
        <authorList>
            <person name="Philippsen P."/>
            <person name="Kleine K."/>
            <person name="Poehlmann R."/>
            <person name="Duesterhoeft A."/>
            <person name="Hamberg K."/>
            <person name="Hegemann J.H."/>
            <person name="Obermaier B."/>
            <person name="Urrestarazu L.A."/>
            <person name="Aert R."/>
            <person name="Albermann K."/>
            <person name="Altmann R."/>
            <person name="Andre B."/>
            <person name="Baladron V."/>
            <person name="Ballesta J.P.G."/>
            <person name="Becam A.-M."/>
            <person name="Beinhauer J.D."/>
            <person name="Boskovic J."/>
            <person name="Buitrago M.J."/>
            <person name="Bussereau F."/>
            <person name="Coster F."/>
            <person name="Crouzet M."/>
            <person name="D'Angelo M."/>
            <person name="Dal Pero F."/>
            <person name="De Antoni A."/>
            <person name="del Rey F."/>
            <person name="Doignon F."/>
            <person name="Domdey H."/>
            <person name="Dubois E."/>
            <person name="Fiedler T.A."/>
            <person name="Fleig U."/>
            <person name="Floeth M."/>
            <person name="Fritz C."/>
            <person name="Gaillardin C."/>
            <person name="Garcia-Cantalejo J.M."/>
            <person name="Glansdorff N."/>
            <person name="Goffeau A."/>
            <person name="Gueldener U."/>
            <person name="Herbert C.J."/>
            <person name="Heumann K."/>
            <person name="Heuss-Neitzel D."/>
            <person name="Hilbert H."/>
            <person name="Hinni K."/>
            <person name="Iraqui Houssaini I."/>
            <person name="Jacquet M."/>
            <person name="Jimenez A."/>
            <person name="Jonniaux J.-L."/>
            <person name="Karpfinger-Hartl L."/>
            <person name="Lanfranchi G."/>
            <person name="Lepingle A."/>
            <person name="Levesque H."/>
            <person name="Lyck R."/>
            <person name="Maftahi M."/>
            <person name="Mallet L."/>
            <person name="Maurer C.T.C."/>
            <person name="Messenguy F."/>
            <person name="Mewes H.-W."/>
            <person name="Moestl D."/>
            <person name="Nasr F."/>
            <person name="Nicaud J.-M."/>
            <person name="Niedenthal R.K."/>
            <person name="Pandolfo D."/>
            <person name="Pierard A."/>
            <person name="Piravandi E."/>
            <person name="Planta R.J."/>
            <person name="Pohl T.M."/>
            <person name="Purnelle B."/>
            <person name="Rebischung C."/>
            <person name="Remacha M.A."/>
            <person name="Revuelta J.L."/>
            <person name="Rinke M."/>
            <person name="Saiz J.E."/>
            <person name="Sartorello F."/>
            <person name="Scherens B."/>
            <person name="Sen-Gupta M."/>
            <person name="Soler-Mira A."/>
            <person name="Urbanus J.H.M."/>
            <person name="Valle G."/>
            <person name="Van Dyck L."/>
            <person name="Verhasselt P."/>
            <person name="Vierendeels F."/>
            <person name="Vissers S."/>
            <person name="Voet M."/>
            <person name="Volckaert G."/>
            <person name="Wach A."/>
            <person name="Wambutt R."/>
            <person name="Wedler H."/>
            <person name="Zollner A."/>
            <person name="Hani J."/>
        </authorList>
    </citation>
    <scope>NUCLEOTIDE SEQUENCE [LARGE SCALE GENOMIC DNA]</scope>
    <source>
        <strain>ATCC 204508 / S288c</strain>
    </source>
</reference>
<reference key="2">
    <citation type="journal article" date="2014" name="G3 (Bethesda)">
        <title>The reference genome sequence of Saccharomyces cerevisiae: Then and now.</title>
        <authorList>
            <person name="Engel S.R."/>
            <person name="Dietrich F.S."/>
            <person name="Fisk D.G."/>
            <person name="Binkley G."/>
            <person name="Balakrishnan R."/>
            <person name="Costanzo M.C."/>
            <person name="Dwight S.S."/>
            <person name="Hitz B.C."/>
            <person name="Karra K."/>
            <person name="Nash R.S."/>
            <person name="Weng S."/>
            <person name="Wong E.D."/>
            <person name="Lloyd P."/>
            <person name="Skrzypek M.S."/>
            <person name="Miyasato S.R."/>
            <person name="Simison M."/>
            <person name="Cherry J.M."/>
        </authorList>
    </citation>
    <scope>GENOME REANNOTATION</scope>
    <source>
        <strain>ATCC 204508 / S288c</strain>
    </source>
</reference>